<proteinExistence type="inferred from homology"/>
<keyword id="KW-0030">Aminoacyl-tRNA synthetase</keyword>
<keyword id="KW-0067">ATP-binding</keyword>
<keyword id="KW-0963">Cytoplasm</keyword>
<keyword id="KW-0436">Ligase</keyword>
<keyword id="KW-0479">Metal-binding</keyword>
<keyword id="KW-0547">Nucleotide-binding</keyword>
<keyword id="KW-0648">Protein biosynthesis</keyword>
<keyword id="KW-0694">RNA-binding</keyword>
<keyword id="KW-0820">tRNA-binding</keyword>
<keyword id="KW-0862">Zinc</keyword>
<gene>
    <name evidence="1" type="primary">thrS</name>
    <name type="ordered locus">Pput_3225</name>
</gene>
<sequence length="640" mass="72729">MPVITLPDGSQRSFDHAVSIAEVAASIGAGLAKATVAGKVDGKLVDACDLISNDATLQIITPKDEEGLEIIRHSCAHLVGHAVKQLYPTAKMVIGPVIDEGFYYDIAYERPFTPEDMAAIEKRMMELIEKDYDVVKKMTPRAEVIDVFTARGEDYKLRLVEDMPDEQAMGLYYHEEYVDMCRGPHVPNTRFLKAFKLTKLSGAYWRGDAKNEQLQRVYGTAWADKKQLAAYIQRIEEAEKRDHRKIGKQLDLFHLQEEAPGMVFWHANGWTVYQVLEQYMRGVQRENGYQEIKTPQVVDRILWERSGHWSNYAENMFTTSSESRDYAVKPMNCPCHVQVFNQGLKSYRDLPLRLAEFGACHRNEPSGALHGIMRVRGFVQDDAHIFCTEEQVKKEAADFIKLTLDVYKDFGFSDIAMKLSTRPAKRVGSEELWDRAETALADALNESGLEWEYQPGEGAFYGPKIEFTLRDCLGRNWQCGTLQYDPNLPERLDASYIAEDNSRVRPVMLHRAILGSFERFIGMLIEHYAGVFPAWLAPTQAVIMNITDKQTDFALEVEKSLNGSGFRAKSDLRNEKIGFKIREHTLLKVPYLLVIGDREVETQTVAVRTREGADLGSMPVAQFVELLTQAVSRRGRQESE</sequence>
<name>SYT_PSEP1</name>
<evidence type="ECO:0000255" key="1">
    <source>
        <dbReference type="HAMAP-Rule" id="MF_00184"/>
    </source>
</evidence>
<evidence type="ECO:0000255" key="2">
    <source>
        <dbReference type="PROSITE-ProRule" id="PRU01228"/>
    </source>
</evidence>
<reference key="1">
    <citation type="submission" date="2007-05" db="EMBL/GenBank/DDBJ databases">
        <title>Complete sequence of Pseudomonas putida F1.</title>
        <authorList>
            <consortium name="US DOE Joint Genome Institute"/>
            <person name="Copeland A."/>
            <person name="Lucas S."/>
            <person name="Lapidus A."/>
            <person name="Barry K."/>
            <person name="Detter J.C."/>
            <person name="Glavina del Rio T."/>
            <person name="Hammon N."/>
            <person name="Israni S."/>
            <person name="Dalin E."/>
            <person name="Tice H."/>
            <person name="Pitluck S."/>
            <person name="Chain P."/>
            <person name="Malfatti S."/>
            <person name="Shin M."/>
            <person name="Vergez L."/>
            <person name="Schmutz J."/>
            <person name="Larimer F."/>
            <person name="Land M."/>
            <person name="Hauser L."/>
            <person name="Kyrpides N."/>
            <person name="Lykidis A."/>
            <person name="Parales R."/>
            <person name="Richardson P."/>
        </authorList>
    </citation>
    <scope>NUCLEOTIDE SEQUENCE [LARGE SCALE GENOMIC DNA]</scope>
    <source>
        <strain>ATCC 700007 / DSM 6899 / JCM 31910 / BCRC 17059 / LMG 24140 / F1</strain>
    </source>
</reference>
<comment type="function">
    <text evidence="1">Catalyzes the attachment of threonine to tRNA(Thr) in a two-step reaction: L-threonine is first activated by ATP to form Thr-AMP and then transferred to the acceptor end of tRNA(Thr). Also edits incorrectly charged L-seryl-tRNA(Thr).</text>
</comment>
<comment type="catalytic activity">
    <reaction evidence="1">
        <text>tRNA(Thr) + L-threonine + ATP = L-threonyl-tRNA(Thr) + AMP + diphosphate + H(+)</text>
        <dbReference type="Rhea" id="RHEA:24624"/>
        <dbReference type="Rhea" id="RHEA-COMP:9670"/>
        <dbReference type="Rhea" id="RHEA-COMP:9704"/>
        <dbReference type="ChEBI" id="CHEBI:15378"/>
        <dbReference type="ChEBI" id="CHEBI:30616"/>
        <dbReference type="ChEBI" id="CHEBI:33019"/>
        <dbReference type="ChEBI" id="CHEBI:57926"/>
        <dbReference type="ChEBI" id="CHEBI:78442"/>
        <dbReference type="ChEBI" id="CHEBI:78534"/>
        <dbReference type="ChEBI" id="CHEBI:456215"/>
        <dbReference type="EC" id="6.1.1.3"/>
    </reaction>
</comment>
<comment type="cofactor">
    <cofactor evidence="1">
        <name>Zn(2+)</name>
        <dbReference type="ChEBI" id="CHEBI:29105"/>
    </cofactor>
    <text evidence="1">Binds 1 zinc ion per subunit.</text>
</comment>
<comment type="subunit">
    <text evidence="1">Homodimer.</text>
</comment>
<comment type="subcellular location">
    <subcellularLocation>
        <location evidence="1">Cytoplasm</location>
    </subcellularLocation>
</comment>
<comment type="similarity">
    <text evidence="1">Belongs to the class-II aminoacyl-tRNA synthetase family.</text>
</comment>
<dbReference type="EC" id="6.1.1.3" evidence="1"/>
<dbReference type="EMBL" id="CP000712">
    <property type="protein sequence ID" value="ABQ79351.1"/>
    <property type="molecule type" value="Genomic_DNA"/>
</dbReference>
<dbReference type="SMR" id="A5W5E1"/>
<dbReference type="KEGG" id="ppf:Pput_3225"/>
<dbReference type="eggNOG" id="COG0441">
    <property type="taxonomic scope" value="Bacteria"/>
</dbReference>
<dbReference type="HOGENOM" id="CLU_008554_0_1_6"/>
<dbReference type="GO" id="GO:0005829">
    <property type="term" value="C:cytosol"/>
    <property type="evidence" value="ECO:0007669"/>
    <property type="project" value="TreeGrafter"/>
</dbReference>
<dbReference type="GO" id="GO:0005524">
    <property type="term" value="F:ATP binding"/>
    <property type="evidence" value="ECO:0007669"/>
    <property type="project" value="UniProtKB-UniRule"/>
</dbReference>
<dbReference type="GO" id="GO:0046872">
    <property type="term" value="F:metal ion binding"/>
    <property type="evidence" value="ECO:0007669"/>
    <property type="project" value="UniProtKB-KW"/>
</dbReference>
<dbReference type="GO" id="GO:0004829">
    <property type="term" value="F:threonine-tRNA ligase activity"/>
    <property type="evidence" value="ECO:0007669"/>
    <property type="project" value="UniProtKB-UniRule"/>
</dbReference>
<dbReference type="GO" id="GO:0000049">
    <property type="term" value="F:tRNA binding"/>
    <property type="evidence" value="ECO:0007669"/>
    <property type="project" value="UniProtKB-KW"/>
</dbReference>
<dbReference type="GO" id="GO:0006435">
    <property type="term" value="P:threonyl-tRNA aminoacylation"/>
    <property type="evidence" value="ECO:0007669"/>
    <property type="project" value="UniProtKB-UniRule"/>
</dbReference>
<dbReference type="CDD" id="cd01667">
    <property type="entry name" value="TGS_ThrRS"/>
    <property type="match status" value="1"/>
</dbReference>
<dbReference type="CDD" id="cd00860">
    <property type="entry name" value="ThrRS_anticodon"/>
    <property type="match status" value="1"/>
</dbReference>
<dbReference type="CDD" id="cd00771">
    <property type="entry name" value="ThrRS_core"/>
    <property type="match status" value="1"/>
</dbReference>
<dbReference type="FunFam" id="3.10.20.30:FF:000005">
    <property type="entry name" value="Threonine--tRNA ligase"/>
    <property type="match status" value="1"/>
</dbReference>
<dbReference type="FunFam" id="3.30.54.20:FF:000002">
    <property type="entry name" value="Threonine--tRNA ligase"/>
    <property type="match status" value="1"/>
</dbReference>
<dbReference type="FunFam" id="3.30.930.10:FF:000002">
    <property type="entry name" value="Threonine--tRNA ligase"/>
    <property type="match status" value="1"/>
</dbReference>
<dbReference type="FunFam" id="3.40.50.800:FF:000001">
    <property type="entry name" value="Threonine--tRNA ligase"/>
    <property type="match status" value="1"/>
</dbReference>
<dbReference type="FunFam" id="3.30.980.10:FF:000005">
    <property type="entry name" value="Threonyl-tRNA synthetase, mitochondrial"/>
    <property type="match status" value="1"/>
</dbReference>
<dbReference type="Gene3D" id="3.10.20.30">
    <property type="match status" value="1"/>
</dbReference>
<dbReference type="Gene3D" id="3.30.54.20">
    <property type="match status" value="1"/>
</dbReference>
<dbReference type="Gene3D" id="3.40.50.800">
    <property type="entry name" value="Anticodon-binding domain"/>
    <property type="match status" value="1"/>
</dbReference>
<dbReference type="Gene3D" id="3.30.930.10">
    <property type="entry name" value="Bira Bifunctional Protein, Domain 2"/>
    <property type="match status" value="1"/>
</dbReference>
<dbReference type="Gene3D" id="3.30.980.10">
    <property type="entry name" value="Threonyl-trna Synthetase, Chain A, domain 2"/>
    <property type="match status" value="1"/>
</dbReference>
<dbReference type="HAMAP" id="MF_00184">
    <property type="entry name" value="Thr_tRNA_synth"/>
    <property type="match status" value="1"/>
</dbReference>
<dbReference type="InterPro" id="IPR002314">
    <property type="entry name" value="aa-tRNA-synt_IIb"/>
</dbReference>
<dbReference type="InterPro" id="IPR006195">
    <property type="entry name" value="aa-tRNA-synth_II"/>
</dbReference>
<dbReference type="InterPro" id="IPR045864">
    <property type="entry name" value="aa-tRNA-synth_II/BPL/LPL"/>
</dbReference>
<dbReference type="InterPro" id="IPR004154">
    <property type="entry name" value="Anticodon-bd"/>
</dbReference>
<dbReference type="InterPro" id="IPR036621">
    <property type="entry name" value="Anticodon-bd_dom_sf"/>
</dbReference>
<dbReference type="InterPro" id="IPR012675">
    <property type="entry name" value="Beta-grasp_dom_sf"/>
</dbReference>
<dbReference type="InterPro" id="IPR004095">
    <property type="entry name" value="TGS"/>
</dbReference>
<dbReference type="InterPro" id="IPR012676">
    <property type="entry name" value="TGS-like"/>
</dbReference>
<dbReference type="InterPro" id="IPR002320">
    <property type="entry name" value="Thr-tRNA-ligase_IIa"/>
</dbReference>
<dbReference type="InterPro" id="IPR018163">
    <property type="entry name" value="Thr/Ala-tRNA-synth_IIc_edit"/>
</dbReference>
<dbReference type="InterPro" id="IPR047246">
    <property type="entry name" value="ThrRS_anticodon"/>
</dbReference>
<dbReference type="InterPro" id="IPR033728">
    <property type="entry name" value="ThrRS_core"/>
</dbReference>
<dbReference type="InterPro" id="IPR012947">
    <property type="entry name" value="tRNA_SAD"/>
</dbReference>
<dbReference type="NCBIfam" id="TIGR00418">
    <property type="entry name" value="thrS"/>
    <property type="match status" value="1"/>
</dbReference>
<dbReference type="PANTHER" id="PTHR11451:SF44">
    <property type="entry name" value="THREONINE--TRNA LIGASE, CHLOROPLASTIC_MITOCHONDRIAL 2"/>
    <property type="match status" value="1"/>
</dbReference>
<dbReference type="PANTHER" id="PTHR11451">
    <property type="entry name" value="THREONINE-TRNA LIGASE"/>
    <property type="match status" value="1"/>
</dbReference>
<dbReference type="Pfam" id="PF03129">
    <property type="entry name" value="HGTP_anticodon"/>
    <property type="match status" value="1"/>
</dbReference>
<dbReference type="Pfam" id="PF02824">
    <property type="entry name" value="TGS"/>
    <property type="match status" value="1"/>
</dbReference>
<dbReference type="Pfam" id="PF00587">
    <property type="entry name" value="tRNA-synt_2b"/>
    <property type="match status" value="1"/>
</dbReference>
<dbReference type="Pfam" id="PF07973">
    <property type="entry name" value="tRNA_SAD"/>
    <property type="match status" value="1"/>
</dbReference>
<dbReference type="PRINTS" id="PR01047">
    <property type="entry name" value="TRNASYNTHTHR"/>
</dbReference>
<dbReference type="SMART" id="SM00863">
    <property type="entry name" value="tRNA_SAD"/>
    <property type="match status" value="1"/>
</dbReference>
<dbReference type="SUPFAM" id="SSF52954">
    <property type="entry name" value="Class II aaRS ABD-related"/>
    <property type="match status" value="1"/>
</dbReference>
<dbReference type="SUPFAM" id="SSF55681">
    <property type="entry name" value="Class II aaRS and biotin synthetases"/>
    <property type="match status" value="1"/>
</dbReference>
<dbReference type="SUPFAM" id="SSF81271">
    <property type="entry name" value="TGS-like"/>
    <property type="match status" value="1"/>
</dbReference>
<dbReference type="SUPFAM" id="SSF55186">
    <property type="entry name" value="ThrRS/AlaRS common domain"/>
    <property type="match status" value="1"/>
</dbReference>
<dbReference type="PROSITE" id="PS50862">
    <property type="entry name" value="AA_TRNA_LIGASE_II"/>
    <property type="match status" value="1"/>
</dbReference>
<dbReference type="PROSITE" id="PS51880">
    <property type="entry name" value="TGS"/>
    <property type="match status" value="1"/>
</dbReference>
<protein>
    <recommendedName>
        <fullName evidence="1">Threonine--tRNA ligase</fullName>
        <ecNumber evidence="1">6.1.1.3</ecNumber>
    </recommendedName>
    <alternativeName>
        <fullName evidence="1">Threonyl-tRNA synthetase</fullName>
        <shortName evidence="1">ThrRS</shortName>
    </alternativeName>
</protein>
<organism>
    <name type="scientific">Pseudomonas putida (strain ATCC 700007 / DSM 6899 / JCM 31910 / BCRC 17059 / LMG 24140 / F1)</name>
    <dbReference type="NCBI Taxonomy" id="351746"/>
    <lineage>
        <taxon>Bacteria</taxon>
        <taxon>Pseudomonadati</taxon>
        <taxon>Pseudomonadota</taxon>
        <taxon>Gammaproteobacteria</taxon>
        <taxon>Pseudomonadales</taxon>
        <taxon>Pseudomonadaceae</taxon>
        <taxon>Pseudomonas</taxon>
    </lineage>
</organism>
<accession>A5W5E1</accession>
<feature type="chain" id="PRO_1000020474" description="Threonine--tRNA ligase">
    <location>
        <begin position="1"/>
        <end position="640"/>
    </location>
</feature>
<feature type="domain" description="TGS" evidence="2">
    <location>
        <begin position="1"/>
        <end position="61"/>
    </location>
</feature>
<feature type="region of interest" description="Catalytic" evidence="1">
    <location>
        <begin position="242"/>
        <end position="533"/>
    </location>
</feature>
<feature type="binding site" evidence="1">
    <location>
        <position position="333"/>
    </location>
    <ligand>
        <name>Zn(2+)</name>
        <dbReference type="ChEBI" id="CHEBI:29105"/>
    </ligand>
</feature>
<feature type="binding site" evidence="1">
    <location>
        <position position="384"/>
    </location>
    <ligand>
        <name>Zn(2+)</name>
        <dbReference type="ChEBI" id="CHEBI:29105"/>
    </ligand>
</feature>
<feature type="binding site" evidence="1">
    <location>
        <position position="510"/>
    </location>
    <ligand>
        <name>Zn(2+)</name>
        <dbReference type="ChEBI" id="CHEBI:29105"/>
    </ligand>
</feature>